<feature type="chain" id="PRO_1000077831" description="UvrABC system protein C">
    <location>
        <begin position="1"/>
        <end position="610"/>
    </location>
</feature>
<feature type="domain" description="GIY-YIG" evidence="1">
    <location>
        <begin position="16"/>
        <end position="94"/>
    </location>
</feature>
<feature type="domain" description="UVR" evidence="1">
    <location>
        <begin position="204"/>
        <end position="239"/>
    </location>
</feature>
<protein>
    <recommendedName>
        <fullName evidence="1">UvrABC system protein C</fullName>
        <shortName evidence="1">Protein UvrC</shortName>
    </recommendedName>
    <alternativeName>
        <fullName evidence="1">Excinuclease ABC subunit C</fullName>
    </alternativeName>
</protein>
<dbReference type="EMBL" id="CP000886">
    <property type="protein sequence ID" value="ABX66625.1"/>
    <property type="molecule type" value="Genomic_DNA"/>
</dbReference>
<dbReference type="RefSeq" id="WP_001289480.1">
    <property type="nucleotide sequence ID" value="NC_010102.1"/>
</dbReference>
<dbReference type="SMR" id="A9MU69"/>
<dbReference type="KEGG" id="spq:SPAB_01210"/>
<dbReference type="PATRIC" id="fig|1016998.12.peg.1142"/>
<dbReference type="HOGENOM" id="CLU_014841_3_0_6"/>
<dbReference type="BioCyc" id="SENT1016998:SPAB_RS05020-MONOMER"/>
<dbReference type="Proteomes" id="UP000008556">
    <property type="component" value="Chromosome"/>
</dbReference>
<dbReference type="GO" id="GO:0005737">
    <property type="term" value="C:cytoplasm"/>
    <property type="evidence" value="ECO:0007669"/>
    <property type="project" value="UniProtKB-SubCell"/>
</dbReference>
<dbReference type="GO" id="GO:0009380">
    <property type="term" value="C:excinuclease repair complex"/>
    <property type="evidence" value="ECO:0007669"/>
    <property type="project" value="InterPro"/>
</dbReference>
<dbReference type="GO" id="GO:0003677">
    <property type="term" value="F:DNA binding"/>
    <property type="evidence" value="ECO:0007669"/>
    <property type="project" value="UniProtKB-UniRule"/>
</dbReference>
<dbReference type="GO" id="GO:0009381">
    <property type="term" value="F:excinuclease ABC activity"/>
    <property type="evidence" value="ECO:0007669"/>
    <property type="project" value="UniProtKB-UniRule"/>
</dbReference>
<dbReference type="GO" id="GO:0006289">
    <property type="term" value="P:nucleotide-excision repair"/>
    <property type="evidence" value="ECO:0007669"/>
    <property type="project" value="UniProtKB-UniRule"/>
</dbReference>
<dbReference type="GO" id="GO:0009432">
    <property type="term" value="P:SOS response"/>
    <property type="evidence" value="ECO:0007669"/>
    <property type="project" value="UniProtKB-UniRule"/>
</dbReference>
<dbReference type="CDD" id="cd10434">
    <property type="entry name" value="GIY-YIG_UvrC_Cho"/>
    <property type="match status" value="1"/>
</dbReference>
<dbReference type="FunFam" id="1.10.150.20:FF:000005">
    <property type="entry name" value="UvrABC system protein C"/>
    <property type="match status" value="1"/>
</dbReference>
<dbReference type="FunFam" id="3.30.420.340:FF:000001">
    <property type="entry name" value="UvrABC system protein C"/>
    <property type="match status" value="1"/>
</dbReference>
<dbReference type="FunFam" id="3.40.1440.10:FF:000001">
    <property type="entry name" value="UvrABC system protein C"/>
    <property type="match status" value="1"/>
</dbReference>
<dbReference type="FunFam" id="4.10.860.10:FF:000002">
    <property type="entry name" value="UvrABC system protein C"/>
    <property type="match status" value="1"/>
</dbReference>
<dbReference type="Gene3D" id="1.10.150.20">
    <property type="entry name" value="5' to 3' exonuclease, C-terminal subdomain"/>
    <property type="match status" value="1"/>
</dbReference>
<dbReference type="Gene3D" id="3.40.1440.10">
    <property type="entry name" value="GIY-YIG endonuclease"/>
    <property type="match status" value="1"/>
</dbReference>
<dbReference type="Gene3D" id="4.10.860.10">
    <property type="entry name" value="UVR domain"/>
    <property type="match status" value="1"/>
</dbReference>
<dbReference type="Gene3D" id="3.30.420.340">
    <property type="entry name" value="UvrC, RNAse H endonuclease domain"/>
    <property type="match status" value="1"/>
</dbReference>
<dbReference type="HAMAP" id="MF_00203">
    <property type="entry name" value="UvrC"/>
    <property type="match status" value="1"/>
</dbReference>
<dbReference type="InterPro" id="IPR000305">
    <property type="entry name" value="GIY-YIG_endonuc"/>
</dbReference>
<dbReference type="InterPro" id="IPR035901">
    <property type="entry name" value="GIY-YIG_endonuc_sf"/>
</dbReference>
<dbReference type="InterPro" id="IPR047296">
    <property type="entry name" value="GIY-YIG_UvrC_Cho"/>
</dbReference>
<dbReference type="InterPro" id="IPR003583">
    <property type="entry name" value="Hlx-hairpin-Hlx_DNA-bd_motif"/>
</dbReference>
<dbReference type="InterPro" id="IPR010994">
    <property type="entry name" value="RuvA_2-like"/>
</dbReference>
<dbReference type="InterPro" id="IPR001943">
    <property type="entry name" value="UVR_dom"/>
</dbReference>
<dbReference type="InterPro" id="IPR036876">
    <property type="entry name" value="UVR_dom_sf"/>
</dbReference>
<dbReference type="InterPro" id="IPR050066">
    <property type="entry name" value="UvrABC_protein_C"/>
</dbReference>
<dbReference type="InterPro" id="IPR004791">
    <property type="entry name" value="UvrC"/>
</dbReference>
<dbReference type="InterPro" id="IPR001162">
    <property type="entry name" value="UvrC_RNase_H_dom"/>
</dbReference>
<dbReference type="InterPro" id="IPR038476">
    <property type="entry name" value="UvrC_RNase_H_dom_sf"/>
</dbReference>
<dbReference type="NCBIfam" id="NF001824">
    <property type="entry name" value="PRK00558.1-5"/>
    <property type="match status" value="1"/>
</dbReference>
<dbReference type="NCBIfam" id="TIGR00194">
    <property type="entry name" value="uvrC"/>
    <property type="match status" value="1"/>
</dbReference>
<dbReference type="PANTHER" id="PTHR30562:SF1">
    <property type="entry name" value="UVRABC SYSTEM PROTEIN C"/>
    <property type="match status" value="1"/>
</dbReference>
<dbReference type="PANTHER" id="PTHR30562">
    <property type="entry name" value="UVRC/OXIDOREDUCTASE"/>
    <property type="match status" value="1"/>
</dbReference>
<dbReference type="Pfam" id="PF01541">
    <property type="entry name" value="GIY-YIG"/>
    <property type="match status" value="1"/>
</dbReference>
<dbReference type="Pfam" id="PF14520">
    <property type="entry name" value="HHH_5"/>
    <property type="match status" value="1"/>
</dbReference>
<dbReference type="Pfam" id="PF02151">
    <property type="entry name" value="UVR"/>
    <property type="match status" value="1"/>
</dbReference>
<dbReference type="Pfam" id="PF22920">
    <property type="entry name" value="UvrC_RNaseH"/>
    <property type="match status" value="1"/>
</dbReference>
<dbReference type="Pfam" id="PF08459">
    <property type="entry name" value="UvrC_RNaseH_dom"/>
    <property type="match status" value="1"/>
</dbReference>
<dbReference type="SMART" id="SM00465">
    <property type="entry name" value="GIYc"/>
    <property type="match status" value="1"/>
</dbReference>
<dbReference type="SMART" id="SM00278">
    <property type="entry name" value="HhH1"/>
    <property type="match status" value="2"/>
</dbReference>
<dbReference type="SUPFAM" id="SSF46600">
    <property type="entry name" value="C-terminal UvrC-binding domain of UvrB"/>
    <property type="match status" value="1"/>
</dbReference>
<dbReference type="SUPFAM" id="SSF82771">
    <property type="entry name" value="GIY-YIG endonuclease"/>
    <property type="match status" value="1"/>
</dbReference>
<dbReference type="SUPFAM" id="SSF47781">
    <property type="entry name" value="RuvA domain 2-like"/>
    <property type="match status" value="1"/>
</dbReference>
<dbReference type="PROSITE" id="PS50164">
    <property type="entry name" value="GIY_YIG"/>
    <property type="match status" value="1"/>
</dbReference>
<dbReference type="PROSITE" id="PS50151">
    <property type="entry name" value="UVR"/>
    <property type="match status" value="1"/>
</dbReference>
<dbReference type="PROSITE" id="PS50165">
    <property type="entry name" value="UVRC"/>
    <property type="match status" value="1"/>
</dbReference>
<organism>
    <name type="scientific">Salmonella paratyphi B (strain ATCC BAA-1250 / SPB7)</name>
    <dbReference type="NCBI Taxonomy" id="1016998"/>
    <lineage>
        <taxon>Bacteria</taxon>
        <taxon>Pseudomonadati</taxon>
        <taxon>Pseudomonadota</taxon>
        <taxon>Gammaproteobacteria</taxon>
        <taxon>Enterobacterales</taxon>
        <taxon>Enterobacteriaceae</taxon>
        <taxon>Salmonella</taxon>
    </lineage>
</organism>
<reference key="1">
    <citation type="submission" date="2007-11" db="EMBL/GenBank/DDBJ databases">
        <authorList>
            <consortium name="The Salmonella enterica serovar Paratyphi B Genome Sequencing Project"/>
            <person name="McClelland M."/>
            <person name="Sanderson E.K."/>
            <person name="Porwollik S."/>
            <person name="Spieth J."/>
            <person name="Clifton W.S."/>
            <person name="Fulton R."/>
            <person name="Cordes M."/>
            <person name="Wollam A."/>
            <person name="Shah N."/>
            <person name="Pepin K."/>
            <person name="Bhonagiri V."/>
            <person name="Nash W."/>
            <person name="Johnson M."/>
            <person name="Thiruvilangam P."/>
            <person name="Wilson R."/>
        </authorList>
    </citation>
    <scope>NUCLEOTIDE SEQUENCE [LARGE SCALE GENOMIC DNA]</scope>
    <source>
        <strain>ATCC BAA-1250 / SPB7</strain>
    </source>
</reference>
<name>UVRC_SALPB</name>
<proteinExistence type="inferred from homology"/>
<evidence type="ECO:0000255" key="1">
    <source>
        <dbReference type="HAMAP-Rule" id="MF_00203"/>
    </source>
</evidence>
<gene>
    <name evidence="1" type="primary">uvrC</name>
    <name type="ordered locus">SPAB_01210</name>
</gene>
<keyword id="KW-0963">Cytoplasm</keyword>
<keyword id="KW-0227">DNA damage</keyword>
<keyword id="KW-0228">DNA excision</keyword>
<keyword id="KW-0234">DNA repair</keyword>
<keyword id="KW-0267">Excision nuclease</keyword>
<keyword id="KW-0742">SOS response</keyword>
<accession>A9MU69</accession>
<sequence>MSEIFDAKAFLKTVTSQPGVYRMYDAGGTVIYVGKAKDLKKRLSSYFRSNLASRKTEALVAQIQHIDVTVTHTETEALLLEHNYIKLYQPRYNVLLRDDKSYPFIFLSGDTHPRLSMHRGAKHAKGEYFGPFPNGYAVRETLALLQKIFPIRQCENSVYRNRSRPCLQYQIGRCLGPCVAGLVSEEEYTQQVEYVRLFLSGKDDQVLTQLIARMEKASQDLAFEEAARIRDQIQAVRRVTEKQFVSNAGDDLDVIGVAFDAGMACVHVLFIRQGKVLGSRSYFPKVPGGTELGEVVETFVGQFYLQGSQMRTLPGEILLDFNLSDKTLLADSLSELAGRRIHVQTKPRGDRARYLKLARTNAATALITKLSQQSTITQRLTALAAVLKLPAIKRMECFDISHTMGEQTVASCVVFDANGPLRAEYRRYNIAGITPGDDYAAMNQVLRRRYGKAIEESKIPDVILIDGGKGQLAQAKAVFAELDVPWDKHRPLLLGVAKGADRKAGLETLFFEPEGEGFSLPPDSPALHVIQHIRDESHDHAIGGHRKKRAKVKNTSTLETIEGVGPKRRQMLLKYMGGLQGLRNASVEEIAKVPGISQGLAEKIFWSLKH</sequence>
<comment type="function">
    <text evidence="1">The UvrABC repair system catalyzes the recognition and processing of DNA lesions. UvrC both incises the 5' and 3' sides of the lesion. The N-terminal half is responsible for the 3' incision and the C-terminal half is responsible for the 5' incision.</text>
</comment>
<comment type="subunit">
    <text evidence="1">Interacts with UvrB in an incision complex.</text>
</comment>
<comment type="subcellular location">
    <subcellularLocation>
        <location evidence="1">Cytoplasm</location>
    </subcellularLocation>
</comment>
<comment type="similarity">
    <text evidence="1">Belongs to the UvrC family.</text>
</comment>